<reference key="1">
    <citation type="journal article" date="1997" name="Nature">
        <title>The nucleotide sequence of Saccharomyces cerevisiae chromosome IV.</title>
        <authorList>
            <person name="Jacq C."/>
            <person name="Alt-Moerbe J."/>
            <person name="Andre B."/>
            <person name="Arnold W."/>
            <person name="Bahr A."/>
            <person name="Ballesta J.P.G."/>
            <person name="Bargues M."/>
            <person name="Baron L."/>
            <person name="Becker A."/>
            <person name="Biteau N."/>
            <person name="Bloecker H."/>
            <person name="Blugeon C."/>
            <person name="Boskovic J."/>
            <person name="Brandt P."/>
            <person name="Brueckner M."/>
            <person name="Buitrago M.J."/>
            <person name="Coster F."/>
            <person name="Delaveau T."/>
            <person name="del Rey F."/>
            <person name="Dujon B."/>
            <person name="Eide L.G."/>
            <person name="Garcia-Cantalejo J.M."/>
            <person name="Goffeau A."/>
            <person name="Gomez-Peris A."/>
            <person name="Granotier C."/>
            <person name="Hanemann V."/>
            <person name="Hankeln T."/>
            <person name="Hoheisel J.D."/>
            <person name="Jaeger W."/>
            <person name="Jimenez A."/>
            <person name="Jonniaux J.-L."/>
            <person name="Kraemer C."/>
            <person name="Kuester H."/>
            <person name="Laamanen P."/>
            <person name="Legros Y."/>
            <person name="Louis E.J."/>
            <person name="Moeller-Rieker S."/>
            <person name="Monnet A."/>
            <person name="Moro M."/>
            <person name="Mueller-Auer S."/>
            <person name="Nussbaumer B."/>
            <person name="Paricio N."/>
            <person name="Paulin L."/>
            <person name="Perea J."/>
            <person name="Perez-Alonso M."/>
            <person name="Perez-Ortin J.E."/>
            <person name="Pohl T.M."/>
            <person name="Prydz H."/>
            <person name="Purnelle B."/>
            <person name="Rasmussen S.W."/>
            <person name="Remacha M.A."/>
            <person name="Revuelta J.L."/>
            <person name="Rieger M."/>
            <person name="Salom D."/>
            <person name="Saluz H.P."/>
            <person name="Saiz J.E."/>
            <person name="Saren A.-M."/>
            <person name="Schaefer M."/>
            <person name="Scharfe M."/>
            <person name="Schmidt E.R."/>
            <person name="Schneider C."/>
            <person name="Scholler P."/>
            <person name="Schwarz S."/>
            <person name="Soler-Mira A."/>
            <person name="Urrestarazu L.A."/>
            <person name="Verhasselt P."/>
            <person name="Vissers S."/>
            <person name="Voet M."/>
            <person name="Volckaert G."/>
            <person name="Wagner G."/>
            <person name="Wambutt R."/>
            <person name="Wedler E."/>
            <person name="Wedler H."/>
            <person name="Woelfl S."/>
            <person name="Harris D.E."/>
            <person name="Bowman S."/>
            <person name="Brown D."/>
            <person name="Churcher C.M."/>
            <person name="Connor R."/>
            <person name="Dedman K."/>
            <person name="Gentles S."/>
            <person name="Hamlin N."/>
            <person name="Hunt S."/>
            <person name="Jones L."/>
            <person name="McDonald S."/>
            <person name="Murphy L.D."/>
            <person name="Niblett D."/>
            <person name="Odell C."/>
            <person name="Oliver K."/>
            <person name="Rajandream M.A."/>
            <person name="Richards C."/>
            <person name="Shore L."/>
            <person name="Walsh S.V."/>
            <person name="Barrell B.G."/>
            <person name="Dietrich F.S."/>
            <person name="Mulligan J.T."/>
            <person name="Allen E."/>
            <person name="Araujo R."/>
            <person name="Aviles E."/>
            <person name="Berno A."/>
            <person name="Carpenter J."/>
            <person name="Chen E."/>
            <person name="Cherry J.M."/>
            <person name="Chung E."/>
            <person name="Duncan M."/>
            <person name="Hunicke-Smith S."/>
            <person name="Hyman R.W."/>
            <person name="Komp C."/>
            <person name="Lashkari D."/>
            <person name="Lew H."/>
            <person name="Lin D."/>
            <person name="Mosedale D."/>
            <person name="Nakahara K."/>
            <person name="Namath A."/>
            <person name="Oefner P."/>
            <person name="Oh C."/>
            <person name="Petel F.X."/>
            <person name="Roberts D."/>
            <person name="Schramm S."/>
            <person name="Schroeder M."/>
            <person name="Shogren T."/>
            <person name="Shroff N."/>
            <person name="Winant A."/>
            <person name="Yelton M.A."/>
            <person name="Botstein D."/>
            <person name="Davis R.W."/>
            <person name="Johnston M."/>
            <person name="Andrews S."/>
            <person name="Brinkman R."/>
            <person name="Cooper J."/>
            <person name="Ding H."/>
            <person name="Du Z."/>
            <person name="Favello A."/>
            <person name="Fulton L."/>
            <person name="Gattung S."/>
            <person name="Greco T."/>
            <person name="Hallsworth K."/>
            <person name="Hawkins J."/>
            <person name="Hillier L.W."/>
            <person name="Jier M."/>
            <person name="Johnson D."/>
            <person name="Johnston L."/>
            <person name="Kirsten J."/>
            <person name="Kucaba T."/>
            <person name="Langston Y."/>
            <person name="Latreille P."/>
            <person name="Le T."/>
            <person name="Mardis E."/>
            <person name="Menezes S."/>
            <person name="Miller N."/>
            <person name="Nhan M."/>
            <person name="Pauley A."/>
            <person name="Peluso D."/>
            <person name="Rifkin L."/>
            <person name="Riles L."/>
            <person name="Taich A."/>
            <person name="Trevaskis E."/>
            <person name="Vignati D."/>
            <person name="Wilcox L."/>
            <person name="Wohldman P."/>
            <person name="Vaudin M."/>
            <person name="Wilson R."/>
            <person name="Waterston R."/>
            <person name="Albermann K."/>
            <person name="Hani J."/>
            <person name="Heumann K."/>
            <person name="Kleine K."/>
            <person name="Mewes H.-W."/>
            <person name="Zollner A."/>
            <person name="Zaccaria P."/>
        </authorList>
    </citation>
    <scope>NUCLEOTIDE SEQUENCE [LARGE SCALE GENOMIC DNA]</scope>
    <source>
        <strain>ATCC 204508 / S288c</strain>
    </source>
</reference>
<reference key="2">
    <citation type="journal article" date="2014" name="G3 (Bethesda)">
        <title>The reference genome sequence of Saccharomyces cerevisiae: Then and now.</title>
        <authorList>
            <person name="Engel S.R."/>
            <person name="Dietrich F.S."/>
            <person name="Fisk D.G."/>
            <person name="Binkley G."/>
            <person name="Balakrishnan R."/>
            <person name="Costanzo M.C."/>
            <person name="Dwight S.S."/>
            <person name="Hitz B.C."/>
            <person name="Karra K."/>
            <person name="Nash R.S."/>
            <person name="Weng S."/>
            <person name="Wong E.D."/>
            <person name="Lloyd P."/>
            <person name="Skrzypek M.S."/>
            <person name="Miyasato S.R."/>
            <person name="Simison M."/>
            <person name="Cherry J.M."/>
        </authorList>
    </citation>
    <scope>GENOME REANNOTATION</scope>
    <source>
        <strain>ATCC 204508 / S288c</strain>
    </source>
</reference>
<reference key="3">
    <citation type="journal article" date="2007" name="Genome Res.">
        <title>Approaching a complete repository of sequence-verified protein-encoding clones for Saccharomyces cerevisiae.</title>
        <authorList>
            <person name="Hu Y."/>
            <person name="Rolfs A."/>
            <person name="Bhullar B."/>
            <person name="Murthy T.V.S."/>
            <person name="Zhu C."/>
            <person name="Berger M.F."/>
            <person name="Camargo A.A."/>
            <person name="Kelley F."/>
            <person name="McCarron S."/>
            <person name="Jepson D."/>
            <person name="Richardson A."/>
            <person name="Raphael J."/>
            <person name="Moreira D."/>
            <person name="Taycher E."/>
            <person name="Zuo D."/>
            <person name="Mohr S."/>
            <person name="Kane M.F."/>
            <person name="Williamson J."/>
            <person name="Simpson A.J.G."/>
            <person name="Bulyk M.L."/>
            <person name="Harlow E."/>
            <person name="Marsischky G."/>
            <person name="Kolodner R.D."/>
            <person name="LaBaer J."/>
        </authorList>
    </citation>
    <scope>NUCLEOTIDE SEQUENCE [GENOMIC DNA]</scope>
    <source>
        <strain>ATCC 204508 / S288c</strain>
    </source>
</reference>
<reference key="4">
    <citation type="journal article" date="2001" name="EMBO J.">
        <title>Sorting of proteins into multivesicular bodies: ubiquitin-dependent and -independent targeting.</title>
        <authorList>
            <person name="Reggiori F."/>
            <person name="Pelham H.R.B."/>
        </authorList>
    </citation>
    <scope>SUBCELLULAR LOCATION</scope>
</reference>
<reference key="5">
    <citation type="journal article" date="2003" name="Nature">
        <title>Global analysis of protein localization in budding yeast.</title>
        <authorList>
            <person name="Huh W.-K."/>
            <person name="Falvo J.V."/>
            <person name="Gerke L.C."/>
            <person name="Carroll A.S."/>
            <person name="Howson R.W."/>
            <person name="Weissman J.S."/>
            <person name="O'Shea E.K."/>
        </authorList>
    </citation>
    <scope>SUBCELLULAR LOCATION [LARGE SCALE ANALYSIS]</scope>
</reference>
<reference key="6">
    <citation type="journal article" date="2003" name="Nature">
        <title>Global analysis of protein expression in yeast.</title>
        <authorList>
            <person name="Ghaemmaghami S."/>
            <person name="Huh W.-K."/>
            <person name="Bower K."/>
            <person name="Howson R.W."/>
            <person name="Belle A."/>
            <person name="Dephoure N."/>
            <person name="O'Shea E.K."/>
            <person name="Weissman J.S."/>
        </authorList>
    </citation>
    <scope>LEVEL OF PROTEIN EXPRESSION [LARGE SCALE ANALYSIS]</scope>
</reference>
<reference key="7">
    <citation type="journal article" date="2005" name="Mol. Cell. Biol.">
        <title>Immunoisolation of the yeast Golgi subcompartments and characterization of a novel membrane protein, Svp26, discovered in the Sed5-containing compartments.</title>
        <authorList>
            <person name="Inadome H."/>
            <person name="Noda Y."/>
            <person name="Adachi H."/>
            <person name="Yoda K."/>
        </authorList>
    </citation>
    <scope>SUBCELLULAR LOCATION</scope>
    <scope>IDENTIFICATION BY MASS SPECTROMETRY</scope>
</reference>
<reference key="8">
    <citation type="journal article" date="2005" name="Mol. Cell. Proteomics">
        <title>Quantitative phosphoproteomics applied to the yeast pheromone signaling pathway.</title>
        <authorList>
            <person name="Gruhler A."/>
            <person name="Olsen J.V."/>
            <person name="Mohammed S."/>
            <person name="Mortensen P."/>
            <person name="Faergeman N.J."/>
            <person name="Mann M."/>
            <person name="Jensen O.N."/>
        </authorList>
    </citation>
    <scope>PHOSPHORYLATION [LARGE SCALE ANALYSIS] AT SER-134</scope>
    <scope>IDENTIFICATION BY MASS SPECTROMETRY [LARGE SCALE ANALYSIS]</scope>
    <source>
        <strain>YAL6B</strain>
    </source>
</reference>
<reference key="9">
    <citation type="journal article" date="2006" name="Cell">
        <title>Global analysis of protein palmitoylation in yeast.</title>
        <authorList>
            <person name="Roth A.F."/>
            <person name="Wan J."/>
            <person name="Bailey A.O."/>
            <person name="Sun B."/>
            <person name="Kuchar J.A."/>
            <person name="Green W.N."/>
            <person name="Phinney B.S."/>
            <person name="Yates J.R. III"/>
            <person name="Davis N.G."/>
        </authorList>
    </citation>
    <scope>PALMITOYLATION AT CYS-2; CYS-3; CYS-5; CYS-7 AND CYS-8</scope>
</reference>
<reference key="10">
    <citation type="journal article" date="2006" name="Proc. Natl. Acad. Sci. U.S.A.">
        <title>A global topology map of the Saccharomyces cerevisiae membrane proteome.</title>
        <authorList>
            <person name="Kim H."/>
            <person name="Melen K."/>
            <person name="Oesterberg M."/>
            <person name="von Heijne G."/>
        </authorList>
    </citation>
    <scope>TOPOLOGY [LARGE SCALE ANALYSIS]</scope>
    <source>
        <strain>ATCC 208353 / W303-1A</strain>
    </source>
</reference>
<reference key="11">
    <citation type="journal article" date="2012" name="Proteomics">
        <title>Sites of ubiquitin attachment in Saccharomyces cerevisiae.</title>
        <authorList>
            <person name="Starita L.M."/>
            <person name="Lo R.S."/>
            <person name="Eng J.K."/>
            <person name="von Haller P.D."/>
            <person name="Fields S."/>
        </authorList>
    </citation>
    <scope>UBIQUITINATION [LARGE SCALE ANALYSIS] AT LYS-128</scope>
    <scope>IDENTIFICATION BY MASS SPECTROMETRY [LARGE SCALE ANALYSIS]</scope>
</reference>
<name>SNA4_YEAST</name>
<comment type="interaction">
    <interactant intactId="EBI-22078">
        <id>Q07549</id>
    </interactant>
    <interactant intactId="EBI-16219">
        <id>P39940</id>
        <label>RSP5</label>
    </interactant>
    <organismsDiffer>false</organismsDiffer>
    <experiments>2</experiments>
</comment>
<comment type="subcellular location">
    <subcellularLocation>
        <location evidence="3 4 6">Vacuole membrane</location>
        <topology evidence="3 4 6">Multi-pass membrane protein</topology>
    </subcellularLocation>
</comment>
<comment type="miscellaneous">
    <text evidence="5">Present with 6780 molecules/cell in log phase SD medium.</text>
</comment>
<comment type="similarity">
    <text evidence="7">Belongs to the UPF0057 (PMP3) family.</text>
</comment>
<feature type="chain" id="PRO_0000193988" description="Protein SNA4">
    <location>
        <begin position="1"/>
        <end position="140"/>
    </location>
</feature>
<feature type="topological domain" description="Cytoplasmic" evidence="1">
    <location>
        <begin position="1"/>
        <end position="8"/>
    </location>
</feature>
<feature type="transmembrane region" description="Helical" evidence="1">
    <location>
        <begin position="9"/>
        <end position="29"/>
    </location>
</feature>
<feature type="topological domain" description="Vacuolar" evidence="1">
    <location>
        <begin position="30"/>
        <end position="41"/>
    </location>
</feature>
<feature type="transmembrane region" description="Helical" evidence="1">
    <location>
        <begin position="42"/>
        <end position="62"/>
    </location>
</feature>
<feature type="topological domain" description="Cytoplasmic" evidence="1">
    <location>
        <begin position="63"/>
        <end position="140"/>
    </location>
</feature>
<feature type="region of interest" description="Disordered" evidence="2">
    <location>
        <begin position="84"/>
        <end position="140"/>
    </location>
</feature>
<feature type="compositionally biased region" description="Polar residues" evidence="2">
    <location>
        <begin position="85"/>
        <end position="108"/>
    </location>
</feature>
<feature type="modified residue" description="Phosphoserine" evidence="9">
    <location>
        <position position="134"/>
    </location>
</feature>
<feature type="lipid moiety-binding region" description="S-palmitoyl cysteine" evidence="8">
    <location>
        <position position="2"/>
    </location>
</feature>
<feature type="lipid moiety-binding region" description="S-palmitoyl cysteine" evidence="8">
    <location>
        <position position="3"/>
    </location>
</feature>
<feature type="lipid moiety-binding region" description="S-palmitoyl cysteine" evidence="8">
    <location>
        <position position="5"/>
    </location>
</feature>
<feature type="lipid moiety-binding region" description="S-palmitoyl cysteine" evidence="8">
    <location>
        <position position="7"/>
    </location>
</feature>
<feature type="lipid moiety-binding region" description="S-palmitoyl cysteine" evidence="8">
    <location>
        <position position="8"/>
    </location>
</feature>
<feature type="cross-link" description="Glycyl lysine isopeptide (Lys-Gly) (interchain with G-Cter in ubiquitin)" evidence="10">
    <location>
        <position position="128"/>
    </location>
</feature>
<evidence type="ECO:0000255" key="1"/>
<evidence type="ECO:0000256" key="2">
    <source>
        <dbReference type="SAM" id="MobiDB-lite"/>
    </source>
</evidence>
<evidence type="ECO:0000269" key="3">
    <source>
    </source>
</evidence>
<evidence type="ECO:0000269" key="4">
    <source>
    </source>
</evidence>
<evidence type="ECO:0000269" key="5">
    <source>
    </source>
</evidence>
<evidence type="ECO:0000269" key="6">
    <source>
    </source>
</evidence>
<evidence type="ECO:0000305" key="7"/>
<evidence type="ECO:0000305" key="8">
    <source>
    </source>
</evidence>
<evidence type="ECO:0007744" key="9">
    <source>
    </source>
</evidence>
<evidence type="ECO:0007744" key="10">
    <source>
    </source>
</evidence>
<protein>
    <recommendedName>
        <fullName>Protein SNA4</fullName>
    </recommendedName>
</protein>
<gene>
    <name type="primary">SNA4</name>
    <name type="ordered locus">YDL123W</name>
</gene>
<proteinExistence type="evidence at protein level"/>
<keyword id="KW-1017">Isopeptide bond</keyword>
<keyword id="KW-0449">Lipoprotein</keyword>
<keyword id="KW-0472">Membrane</keyword>
<keyword id="KW-0564">Palmitate</keyword>
<keyword id="KW-0597">Phosphoprotein</keyword>
<keyword id="KW-1185">Reference proteome</keyword>
<keyword id="KW-0812">Transmembrane</keyword>
<keyword id="KW-1133">Transmembrane helix</keyword>
<keyword id="KW-0832">Ubl conjugation</keyword>
<keyword id="KW-0926">Vacuole</keyword>
<accession>Q07549</accession>
<accession>D6VRM7</accession>
<organism>
    <name type="scientific">Saccharomyces cerevisiae (strain ATCC 204508 / S288c)</name>
    <name type="common">Baker's yeast</name>
    <dbReference type="NCBI Taxonomy" id="559292"/>
    <lineage>
        <taxon>Eukaryota</taxon>
        <taxon>Fungi</taxon>
        <taxon>Dikarya</taxon>
        <taxon>Ascomycota</taxon>
        <taxon>Saccharomycotina</taxon>
        <taxon>Saccharomycetes</taxon>
        <taxon>Saccharomycetales</taxon>
        <taxon>Saccharomycetaceae</taxon>
        <taxon>Saccharomyces</taxon>
    </lineage>
</organism>
<dbReference type="EMBL" id="Z74171">
    <property type="protein sequence ID" value="CAA98691.1"/>
    <property type="molecule type" value="Genomic_DNA"/>
</dbReference>
<dbReference type="EMBL" id="AY558162">
    <property type="protein sequence ID" value="AAS56488.1"/>
    <property type="molecule type" value="Genomic_DNA"/>
</dbReference>
<dbReference type="EMBL" id="BK006938">
    <property type="protein sequence ID" value="DAA11737.1"/>
    <property type="molecule type" value="Genomic_DNA"/>
</dbReference>
<dbReference type="PIR" id="S67666">
    <property type="entry name" value="S67666"/>
</dbReference>
<dbReference type="RefSeq" id="NP_010160.1">
    <property type="nucleotide sequence ID" value="NM_001180182.1"/>
</dbReference>
<dbReference type="BioGRID" id="31940">
    <property type="interactions" value="48"/>
</dbReference>
<dbReference type="DIP" id="DIP-2816N"/>
<dbReference type="FunCoup" id="Q07549">
    <property type="interactions" value="441"/>
</dbReference>
<dbReference type="IntAct" id="Q07549">
    <property type="interactions" value="41"/>
</dbReference>
<dbReference type="MINT" id="Q07549"/>
<dbReference type="STRING" id="4932.YDL123W"/>
<dbReference type="TCDB" id="9.B.12.3.2">
    <property type="family name" value="the sensitivity to sodium or salt stress-induced hydrophobic peptide (sna) family"/>
</dbReference>
<dbReference type="iPTMnet" id="Q07549"/>
<dbReference type="SwissPalm" id="Q07549"/>
<dbReference type="PaxDb" id="4932-YDL123W"/>
<dbReference type="PeptideAtlas" id="Q07549"/>
<dbReference type="EnsemblFungi" id="YDL123W_mRNA">
    <property type="protein sequence ID" value="YDL123W"/>
    <property type="gene ID" value="YDL123W"/>
</dbReference>
<dbReference type="GeneID" id="851434"/>
<dbReference type="KEGG" id="sce:YDL123W"/>
<dbReference type="AGR" id="SGD:S000002281"/>
<dbReference type="SGD" id="S000002281">
    <property type="gene designation" value="SNA4"/>
</dbReference>
<dbReference type="VEuPathDB" id="FungiDB:YDL123W"/>
<dbReference type="eggNOG" id="KOG1773">
    <property type="taxonomic scope" value="Eukaryota"/>
</dbReference>
<dbReference type="GeneTree" id="ENSGT00940000176576"/>
<dbReference type="HOGENOM" id="CLU_107649_0_2_1"/>
<dbReference type="InParanoid" id="Q07549"/>
<dbReference type="OMA" id="TIYYVYR"/>
<dbReference type="OrthoDB" id="2802411at2759"/>
<dbReference type="BioCyc" id="YEAST:G3O-29522-MONOMER"/>
<dbReference type="BioGRID-ORCS" id="851434">
    <property type="hits" value="1 hit in 10 CRISPR screens"/>
</dbReference>
<dbReference type="PRO" id="PR:Q07549"/>
<dbReference type="Proteomes" id="UP000002311">
    <property type="component" value="Chromosome IV"/>
</dbReference>
<dbReference type="RNAct" id="Q07549">
    <property type="molecule type" value="protein"/>
</dbReference>
<dbReference type="GO" id="GO:0000328">
    <property type="term" value="C:fungal-type vacuole lumen"/>
    <property type="evidence" value="ECO:0000314"/>
    <property type="project" value="SGD"/>
</dbReference>
<dbReference type="GO" id="GO:0000329">
    <property type="term" value="C:fungal-type vacuole membrane"/>
    <property type="evidence" value="ECO:0000314"/>
    <property type="project" value="SGD"/>
</dbReference>
<dbReference type="InterPro" id="IPR000612">
    <property type="entry name" value="PMP3"/>
</dbReference>
<dbReference type="PANTHER" id="PTHR21659">
    <property type="entry name" value="HYDROPHOBIC PROTEIN RCI2 LOW TEMPERATURE AND SALT RESPONSIVE PROTEIN LTI6 -RELATED"/>
    <property type="match status" value="1"/>
</dbReference>
<dbReference type="PANTHER" id="PTHR21659:SF114">
    <property type="entry name" value="PROTEIN SNA4"/>
    <property type="match status" value="1"/>
</dbReference>
<dbReference type="Pfam" id="PF01679">
    <property type="entry name" value="Pmp3"/>
    <property type="match status" value="1"/>
</dbReference>
<dbReference type="PROSITE" id="PS01309">
    <property type="entry name" value="UPF0057"/>
    <property type="match status" value="1"/>
</dbReference>
<sequence length="140" mass="15673">MCCYCVCCTVSDFILYIVAFFFPPAAVLLRSGPCSSDFLLNVLLTLLGFLPGMLHAFYYITITSPLRNAEYVYYYQQGWVDSERNVPSNRPQNSQTPQNRPQQGSSARNVYPSVETPLLQGAAPHDNKQSLVESPPPYVP</sequence>